<dbReference type="EC" id="3.1.1.29" evidence="1"/>
<dbReference type="EMBL" id="CP000849">
    <property type="protein sequence ID" value="ABV78893.1"/>
    <property type="molecule type" value="Genomic_DNA"/>
</dbReference>
<dbReference type="RefSeq" id="WP_012151719.1">
    <property type="nucleotide sequence ID" value="NC_009883.1"/>
</dbReference>
<dbReference type="SMR" id="A8GVL6"/>
<dbReference type="KEGG" id="rbo:A1I_02595"/>
<dbReference type="HOGENOM" id="CLU_062456_2_2_5"/>
<dbReference type="GO" id="GO:0005737">
    <property type="term" value="C:cytoplasm"/>
    <property type="evidence" value="ECO:0007669"/>
    <property type="project" value="UniProtKB-SubCell"/>
</dbReference>
<dbReference type="GO" id="GO:0004045">
    <property type="term" value="F:peptidyl-tRNA hydrolase activity"/>
    <property type="evidence" value="ECO:0007669"/>
    <property type="project" value="UniProtKB-UniRule"/>
</dbReference>
<dbReference type="GO" id="GO:0000049">
    <property type="term" value="F:tRNA binding"/>
    <property type="evidence" value="ECO:0007669"/>
    <property type="project" value="UniProtKB-UniRule"/>
</dbReference>
<dbReference type="GO" id="GO:0006515">
    <property type="term" value="P:protein quality control for misfolded or incompletely synthesized proteins"/>
    <property type="evidence" value="ECO:0007669"/>
    <property type="project" value="UniProtKB-UniRule"/>
</dbReference>
<dbReference type="GO" id="GO:0072344">
    <property type="term" value="P:rescue of stalled ribosome"/>
    <property type="evidence" value="ECO:0007669"/>
    <property type="project" value="UniProtKB-UniRule"/>
</dbReference>
<dbReference type="CDD" id="cd00462">
    <property type="entry name" value="PTH"/>
    <property type="match status" value="1"/>
</dbReference>
<dbReference type="FunFam" id="3.40.50.1470:FF:000001">
    <property type="entry name" value="Peptidyl-tRNA hydrolase"/>
    <property type="match status" value="1"/>
</dbReference>
<dbReference type="Gene3D" id="3.40.50.1470">
    <property type="entry name" value="Peptidyl-tRNA hydrolase"/>
    <property type="match status" value="1"/>
</dbReference>
<dbReference type="HAMAP" id="MF_00083">
    <property type="entry name" value="Pept_tRNA_hydro_bact"/>
    <property type="match status" value="1"/>
</dbReference>
<dbReference type="InterPro" id="IPR001328">
    <property type="entry name" value="Pept_tRNA_hydro"/>
</dbReference>
<dbReference type="InterPro" id="IPR018171">
    <property type="entry name" value="Pept_tRNA_hydro_CS"/>
</dbReference>
<dbReference type="InterPro" id="IPR036416">
    <property type="entry name" value="Pept_tRNA_hydro_sf"/>
</dbReference>
<dbReference type="NCBIfam" id="TIGR00447">
    <property type="entry name" value="pth"/>
    <property type="match status" value="1"/>
</dbReference>
<dbReference type="PANTHER" id="PTHR17224">
    <property type="entry name" value="PEPTIDYL-TRNA HYDROLASE"/>
    <property type="match status" value="1"/>
</dbReference>
<dbReference type="PANTHER" id="PTHR17224:SF1">
    <property type="entry name" value="PEPTIDYL-TRNA HYDROLASE"/>
    <property type="match status" value="1"/>
</dbReference>
<dbReference type="Pfam" id="PF01195">
    <property type="entry name" value="Pept_tRNA_hydro"/>
    <property type="match status" value="1"/>
</dbReference>
<dbReference type="SUPFAM" id="SSF53178">
    <property type="entry name" value="Peptidyl-tRNA hydrolase-like"/>
    <property type="match status" value="1"/>
</dbReference>
<dbReference type="PROSITE" id="PS01195">
    <property type="entry name" value="PEPT_TRNA_HYDROL_1"/>
    <property type="match status" value="1"/>
</dbReference>
<dbReference type="PROSITE" id="PS01196">
    <property type="entry name" value="PEPT_TRNA_HYDROL_2"/>
    <property type="match status" value="1"/>
</dbReference>
<proteinExistence type="inferred from homology"/>
<keyword id="KW-0963">Cytoplasm</keyword>
<keyword id="KW-0378">Hydrolase</keyword>
<keyword id="KW-0694">RNA-binding</keyword>
<keyword id="KW-0820">tRNA-binding</keyword>
<comment type="function">
    <text evidence="1">Hydrolyzes ribosome-free peptidyl-tRNAs (with 1 or more amino acids incorporated), which drop off the ribosome during protein synthesis, or as a result of ribosome stalling.</text>
</comment>
<comment type="function">
    <text evidence="1">Catalyzes the release of premature peptidyl moieties from peptidyl-tRNA molecules trapped in stalled 50S ribosomal subunits, and thus maintains levels of free tRNAs and 50S ribosomes.</text>
</comment>
<comment type="catalytic activity">
    <reaction evidence="1">
        <text>an N-acyl-L-alpha-aminoacyl-tRNA + H2O = an N-acyl-L-amino acid + a tRNA + H(+)</text>
        <dbReference type="Rhea" id="RHEA:54448"/>
        <dbReference type="Rhea" id="RHEA-COMP:10123"/>
        <dbReference type="Rhea" id="RHEA-COMP:13883"/>
        <dbReference type="ChEBI" id="CHEBI:15377"/>
        <dbReference type="ChEBI" id="CHEBI:15378"/>
        <dbReference type="ChEBI" id="CHEBI:59874"/>
        <dbReference type="ChEBI" id="CHEBI:78442"/>
        <dbReference type="ChEBI" id="CHEBI:138191"/>
        <dbReference type="EC" id="3.1.1.29"/>
    </reaction>
</comment>
<comment type="subunit">
    <text evidence="1">Monomer.</text>
</comment>
<comment type="subcellular location">
    <subcellularLocation>
        <location evidence="1">Cytoplasm</location>
    </subcellularLocation>
</comment>
<comment type="similarity">
    <text evidence="1">Belongs to the PTH family.</text>
</comment>
<organism>
    <name type="scientific">Rickettsia bellii (strain OSU 85-389)</name>
    <dbReference type="NCBI Taxonomy" id="391896"/>
    <lineage>
        <taxon>Bacteria</taxon>
        <taxon>Pseudomonadati</taxon>
        <taxon>Pseudomonadota</taxon>
        <taxon>Alphaproteobacteria</taxon>
        <taxon>Rickettsiales</taxon>
        <taxon>Rickettsiaceae</taxon>
        <taxon>Rickettsieae</taxon>
        <taxon>Rickettsia</taxon>
        <taxon>belli group</taxon>
    </lineage>
</organism>
<feature type="chain" id="PRO_1000010641" description="Peptidyl-tRNA hydrolase">
    <location>
        <begin position="1"/>
        <end position="185"/>
    </location>
</feature>
<feature type="active site" description="Proton acceptor" evidence="1">
    <location>
        <position position="19"/>
    </location>
</feature>
<feature type="binding site" evidence="1">
    <location>
        <position position="14"/>
    </location>
    <ligand>
        <name>tRNA</name>
        <dbReference type="ChEBI" id="CHEBI:17843"/>
    </ligand>
</feature>
<feature type="binding site" evidence="1">
    <location>
        <position position="65"/>
    </location>
    <ligand>
        <name>tRNA</name>
        <dbReference type="ChEBI" id="CHEBI:17843"/>
    </ligand>
</feature>
<feature type="binding site" evidence="1">
    <location>
        <position position="67"/>
    </location>
    <ligand>
        <name>tRNA</name>
        <dbReference type="ChEBI" id="CHEBI:17843"/>
    </ligand>
</feature>
<feature type="binding site" evidence="1">
    <location>
        <position position="113"/>
    </location>
    <ligand>
        <name>tRNA</name>
        <dbReference type="ChEBI" id="CHEBI:17843"/>
    </ligand>
</feature>
<feature type="site" description="Discriminates between blocked and unblocked aminoacyl-tRNA" evidence="1">
    <location>
        <position position="9"/>
    </location>
</feature>
<feature type="site" description="Stabilizes the basic form of H active site to accept a proton" evidence="1">
    <location>
        <position position="92"/>
    </location>
</feature>
<sequence length="185" mass="20912">MMLIIGLGNPGKEYEHTRHNIGFIALENIAKQYETSFSVKKKFHCEIAESTNNGQKLIFVKPTTYMNLSGKSVIAVKTYYNIPLEKIFVIHDDIDLELGKIKFKTGGGNGGHNGLKSIDGIIENNYHRIRIGVGRPQNSQDVADYVLNNFSKTEYVIAEQAIDKITDNFNLILENKLEEFKSKMV</sequence>
<evidence type="ECO:0000255" key="1">
    <source>
        <dbReference type="HAMAP-Rule" id="MF_00083"/>
    </source>
</evidence>
<protein>
    <recommendedName>
        <fullName evidence="1">Peptidyl-tRNA hydrolase</fullName>
        <shortName evidence="1">Pth</shortName>
        <ecNumber evidence="1">3.1.1.29</ecNumber>
    </recommendedName>
</protein>
<gene>
    <name evidence="1" type="primary">pth</name>
    <name type="ordered locus">A1I_02595</name>
</gene>
<accession>A8GVL6</accession>
<reference key="1">
    <citation type="submission" date="2007-09" db="EMBL/GenBank/DDBJ databases">
        <title>Complete genome sequencing of Rickettsia bellii.</title>
        <authorList>
            <person name="Madan A."/>
            <person name="Lee H."/>
            <person name="Madan A."/>
            <person name="Yoon J.-G."/>
            <person name="Ryu G.-Y."/>
            <person name="Dasch G."/>
            <person name="Ereemeva M."/>
        </authorList>
    </citation>
    <scope>NUCLEOTIDE SEQUENCE [LARGE SCALE GENOMIC DNA]</scope>
    <source>
        <strain>OSU 85-389</strain>
    </source>
</reference>
<name>PTH_RICB8</name>